<reference key="1">
    <citation type="submission" date="2007-03" db="EMBL/GenBank/DDBJ databases">
        <title>Complete sequence of Shewanella loihica PV-4.</title>
        <authorList>
            <consortium name="US DOE Joint Genome Institute"/>
            <person name="Copeland A."/>
            <person name="Lucas S."/>
            <person name="Lapidus A."/>
            <person name="Barry K."/>
            <person name="Detter J.C."/>
            <person name="Glavina del Rio T."/>
            <person name="Hammon N."/>
            <person name="Israni S."/>
            <person name="Dalin E."/>
            <person name="Tice H."/>
            <person name="Pitluck S."/>
            <person name="Chain P."/>
            <person name="Malfatti S."/>
            <person name="Shin M."/>
            <person name="Vergez L."/>
            <person name="Schmutz J."/>
            <person name="Larimer F."/>
            <person name="Land M."/>
            <person name="Hauser L."/>
            <person name="Kyrpides N."/>
            <person name="Mikhailova N."/>
            <person name="Romine M.F."/>
            <person name="Serres G."/>
            <person name="Fredrickson J."/>
            <person name="Tiedje J."/>
            <person name="Richardson P."/>
        </authorList>
    </citation>
    <scope>NUCLEOTIDE SEQUENCE [LARGE SCALE GENOMIC DNA]</scope>
    <source>
        <strain>ATCC BAA-1088 / PV-4</strain>
    </source>
</reference>
<accession>A3QF51</accession>
<organism>
    <name type="scientific">Shewanella loihica (strain ATCC BAA-1088 / PV-4)</name>
    <dbReference type="NCBI Taxonomy" id="323850"/>
    <lineage>
        <taxon>Bacteria</taxon>
        <taxon>Pseudomonadati</taxon>
        <taxon>Pseudomonadota</taxon>
        <taxon>Gammaproteobacteria</taxon>
        <taxon>Alteromonadales</taxon>
        <taxon>Shewanellaceae</taxon>
        <taxon>Shewanella</taxon>
    </lineage>
</organism>
<dbReference type="EMBL" id="CP000606">
    <property type="protein sequence ID" value="ABO24099.1"/>
    <property type="molecule type" value="Genomic_DNA"/>
</dbReference>
<dbReference type="RefSeq" id="WP_011866031.1">
    <property type="nucleotide sequence ID" value="NC_009092.1"/>
</dbReference>
<dbReference type="SMR" id="A3QF51"/>
<dbReference type="STRING" id="323850.Shew_2233"/>
<dbReference type="KEGG" id="slo:Shew_2233"/>
<dbReference type="eggNOG" id="COG0353">
    <property type="taxonomic scope" value="Bacteria"/>
</dbReference>
<dbReference type="HOGENOM" id="CLU_060739_1_2_6"/>
<dbReference type="OrthoDB" id="9802672at2"/>
<dbReference type="Proteomes" id="UP000001558">
    <property type="component" value="Chromosome"/>
</dbReference>
<dbReference type="GO" id="GO:0003677">
    <property type="term" value="F:DNA binding"/>
    <property type="evidence" value="ECO:0007669"/>
    <property type="project" value="UniProtKB-UniRule"/>
</dbReference>
<dbReference type="GO" id="GO:0008270">
    <property type="term" value="F:zinc ion binding"/>
    <property type="evidence" value="ECO:0007669"/>
    <property type="project" value="UniProtKB-KW"/>
</dbReference>
<dbReference type="GO" id="GO:0006310">
    <property type="term" value="P:DNA recombination"/>
    <property type="evidence" value="ECO:0007669"/>
    <property type="project" value="UniProtKB-UniRule"/>
</dbReference>
<dbReference type="GO" id="GO:0006281">
    <property type="term" value="P:DNA repair"/>
    <property type="evidence" value="ECO:0007669"/>
    <property type="project" value="UniProtKB-UniRule"/>
</dbReference>
<dbReference type="CDD" id="cd01025">
    <property type="entry name" value="TOPRIM_recR"/>
    <property type="match status" value="1"/>
</dbReference>
<dbReference type="FunFam" id="1.10.8.420:FF:000001">
    <property type="entry name" value="Recombination protein RecR"/>
    <property type="match status" value="1"/>
</dbReference>
<dbReference type="FunFam" id="3.40.1360.10:FF:000001">
    <property type="entry name" value="Recombination protein RecR"/>
    <property type="match status" value="1"/>
</dbReference>
<dbReference type="Gene3D" id="3.40.1360.10">
    <property type="match status" value="1"/>
</dbReference>
<dbReference type="Gene3D" id="6.10.250.240">
    <property type="match status" value="1"/>
</dbReference>
<dbReference type="Gene3D" id="1.10.8.420">
    <property type="entry name" value="RecR Domain 1"/>
    <property type="match status" value="1"/>
</dbReference>
<dbReference type="HAMAP" id="MF_00017">
    <property type="entry name" value="RecR"/>
    <property type="match status" value="1"/>
</dbReference>
<dbReference type="InterPro" id="IPR000093">
    <property type="entry name" value="DNA_Rcmb_RecR"/>
</dbReference>
<dbReference type="InterPro" id="IPR023627">
    <property type="entry name" value="Rcmb_RecR"/>
</dbReference>
<dbReference type="InterPro" id="IPR015967">
    <property type="entry name" value="Rcmb_RecR_Znf"/>
</dbReference>
<dbReference type="InterPro" id="IPR006171">
    <property type="entry name" value="TOPRIM_dom"/>
</dbReference>
<dbReference type="InterPro" id="IPR034137">
    <property type="entry name" value="TOPRIM_RecR"/>
</dbReference>
<dbReference type="NCBIfam" id="TIGR00615">
    <property type="entry name" value="recR"/>
    <property type="match status" value="1"/>
</dbReference>
<dbReference type="PANTHER" id="PTHR30446">
    <property type="entry name" value="RECOMBINATION PROTEIN RECR"/>
    <property type="match status" value="1"/>
</dbReference>
<dbReference type="PANTHER" id="PTHR30446:SF0">
    <property type="entry name" value="RECOMBINATION PROTEIN RECR"/>
    <property type="match status" value="1"/>
</dbReference>
<dbReference type="Pfam" id="PF21175">
    <property type="entry name" value="RecR_C"/>
    <property type="match status" value="1"/>
</dbReference>
<dbReference type="Pfam" id="PF21176">
    <property type="entry name" value="RecR_HhH"/>
    <property type="match status" value="1"/>
</dbReference>
<dbReference type="Pfam" id="PF02132">
    <property type="entry name" value="RecR_ZnF"/>
    <property type="match status" value="1"/>
</dbReference>
<dbReference type="Pfam" id="PF13662">
    <property type="entry name" value="Toprim_4"/>
    <property type="match status" value="1"/>
</dbReference>
<dbReference type="SMART" id="SM00493">
    <property type="entry name" value="TOPRIM"/>
    <property type="match status" value="1"/>
</dbReference>
<dbReference type="SUPFAM" id="SSF111304">
    <property type="entry name" value="Recombination protein RecR"/>
    <property type="match status" value="1"/>
</dbReference>
<dbReference type="PROSITE" id="PS50880">
    <property type="entry name" value="TOPRIM"/>
    <property type="match status" value="1"/>
</dbReference>
<protein>
    <recommendedName>
        <fullName evidence="1">Recombination protein RecR</fullName>
    </recommendedName>
</protein>
<gene>
    <name evidence="1" type="primary">recR</name>
    <name type="ordered locus">Shew_2233</name>
</gene>
<name>RECR_SHELP</name>
<feature type="chain" id="PRO_1000001605" description="Recombination protein RecR">
    <location>
        <begin position="1"/>
        <end position="199"/>
    </location>
</feature>
<feature type="domain" description="Toprim" evidence="1">
    <location>
        <begin position="81"/>
        <end position="176"/>
    </location>
</feature>
<feature type="zinc finger region" description="C4-type" evidence="1">
    <location>
        <begin position="57"/>
        <end position="72"/>
    </location>
</feature>
<keyword id="KW-0227">DNA damage</keyword>
<keyword id="KW-0233">DNA recombination</keyword>
<keyword id="KW-0234">DNA repair</keyword>
<keyword id="KW-0479">Metal-binding</keyword>
<keyword id="KW-1185">Reference proteome</keyword>
<keyword id="KW-0862">Zinc</keyword>
<keyword id="KW-0863">Zinc-finger</keyword>
<sequence length="199" mass="21137">MKFSPLVDELIQSLRCLPGVGPKSAQRMAFQLLERDRKAGHKLAQALSSAMSDVGHCSSCRTFTEESLCPICASSRRGNSDLICVVETPADVLAIEAGGHFSGRYFVLLGHLSPLDGVGPDELGLSLLETHLASGEVSELILATNPTVEGDATAHFIADMAKQHEVNVSRIAHGVPVGGELEYVDSTTLALSFNGRIPL</sequence>
<proteinExistence type="inferred from homology"/>
<comment type="function">
    <text evidence="1">May play a role in DNA repair. It seems to be involved in an RecBC-independent recombinational process of DNA repair. It may act with RecF and RecO.</text>
</comment>
<comment type="similarity">
    <text evidence="1">Belongs to the RecR family.</text>
</comment>
<evidence type="ECO:0000255" key="1">
    <source>
        <dbReference type="HAMAP-Rule" id="MF_00017"/>
    </source>
</evidence>